<organism>
    <name type="scientific">Vibrio campbellii (strain ATCC BAA-1116)</name>
    <dbReference type="NCBI Taxonomy" id="2902295"/>
    <lineage>
        <taxon>Bacteria</taxon>
        <taxon>Pseudomonadati</taxon>
        <taxon>Pseudomonadota</taxon>
        <taxon>Gammaproteobacteria</taxon>
        <taxon>Vibrionales</taxon>
        <taxon>Vibrionaceae</taxon>
        <taxon>Vibrio</taxon>
    </lineage>
</organism>
<keyword id="KW-0997">Cell inner membrane</keyword>
<keyword id="KW-1003">Cell membrane</keyword>
<keyword id="KW-0444">Lipid biosynthesis</keyword>
<keyword id="KW-0443">Lipid metabolism</keyword>
<keyword id="KW-0472">Membrane</keyword>
<keyword id="KW-0594">Phospholipid biosynthesis</keyword>
<keyword id="KW-1208">Phospholipid metabolism</keyword>
<keyword id="KW-0808">Transferase</keyword>
<keyword id="KW-0812">Transmembrane</keyword>
<keyword id="KW-1133">Transmembrane helix</keyword>
<sequence>MDALALIMTMAAYLLGSISSAVLICRLLRLPDPRKVGSNNPGATNVLRIGGKGAAVAVLLCDMLKGTIPVWGGYFLGIDPIILGVIAIAACLGHMYPIFFHFKGGKGVATALGAIAPIGLDLTGLVMLTWLSVAVLFRYSSLAALVTVLVTPFYTWMFKPQYTLPVAMLCCLIVFKHHQNIRRLLSGEEPKIGEKKLIEKNSA</sequence>
<proteinExistence type="inferred from homology"/>
<protein>
    <recommendedName>
        <fullName evidence="1">Glycerol-3-phosphate acyltransferase</fullName>
    </recommendedName>
    <alternativeName>
        <fullName evidence="1">Acyl-PO4 G3P acyltransferase</fullName>
    </alternativeName>
    <alternativeName>
        <fullName evidence="1">Acyl-phosphate--glycerol-3-phosphate acyltransferase</fullName>
    </alternativeName>
    <alternativeName>
        <fullName evidence="1">G3P acyltransferase</fullName>
        <shortName evidence="1">GPAT</shortName>
        <ecNumber evidence="1">2.3.1.275</ecNumber>
    </alternativeName>
    <alternativeName>
        <fullName evidence="1">Lysophosphatidic acid synthase</fullName>
        <shortName evidence="1">LPA synthase</shortName>
    </alternativeName>
</protein>
<dbReference type="EC" id="2.3.1.275" evidence="1"/>
<dbReference type="EMBL" id="CP000789">
    <property type="protein sequence ID" value="ABU69854.1"/>
    <property type="molecule type" value="Genomic_DNA"/>
</dbReference>
<dbReference type="RefSeq" id="WP_005528783.1">
    <property type="nucleotide sequence ID" value="NC_022269.1"/>
</dbReference>
<dbReference type="SMR" id="A7MWQ0"/>
<dbReference type="GeneID" id="67378507"/>
<dbReference type="KEGG" id="vha:VIBHAR_00854"/>
<dbReference type="PATRIC" id="fig|338187.25.peg.1762"/>
<dbReference type="UniPathway" id="UPA00085"/>
<dbReference type="Proteomes" id="UP000008152">
    <property type="component" value="Chromosome I"/>
</dbReference>
<dbReference type="GO" id="GO:0005886">
    <property type="term" value="C:plasma membrane"/>
    <property type="evidence" value="ECO:0007669"/>
    <property type="project" value="UniProtKB-SubCell"/>
</dbReference>
<dbReference type="GO" id="GO:0043772">
    <property type="term" value="F:acyl-phosphate glycerol-3-phosphate acyltransferase activity"/>
    <property type="evidence" value="ECO:0007669"/>
    <property type="project" value="UniProtKB-UniRule"/>
</dbReference>
<dbReference type="GO" id="GO:0008654">
    <property type="term" value="P:phospholipid biosynthetic process"/>
    <property type="evidence" value="ECO:0007669"/>
    <property type="project" value="UniProtKB-UniRule"/>
</dbReference>
<dbReference type="HAMAP" id="MF_01043">
    <property type="entry name" value="PlsY"/>
    <property type="match status" value="1"/>
</dbReference>
<dbReference type="InterPro" id="IPR003811">
    <property type="entry name" value="G3P_acylTferase_PlsY"/>
</dbReference>
<dbReference type="NCBIfam" id="TIGR00023">
    <property type="entry name" value="glycerol-3-phosphate 1-O-acyltransferase PlsY"/>
    <property type="match status" value="1"/>
</dbReference>
<dbReference type="PANTHER" id="PTHR30309:SF0">
    <property type="entry name" value="GLYCEROL-3-PHOSPHATE ACYLTRANSFERASE-RELATED"/>
    <property type="match status" value="1"/>
</dbReference>
<dbReference type="PANTHER" id="PTHR30309">
    <property type="entry name" value="INNER MEMBRANE PROTEIN YGIH"/>
    <property type="match status" value="1"/>
</dbReference>
<dbReference type="Pfam" id="PF02660">
    <property type="entry name" value="G3P_acyltransf"/>
    <property type="match status" value="1"/>
</dbReference>
<dbReference type="SMART" id="SM01207">
    <property type="entry name" value="G3P_acyltransf"/>
    <property type="match status" value="1"/>
</dbReference>
<evidence type="ECO:0000255" key="1">
    <source>
        <dbReference type="HAMAP-Rule" id="MF_01043"/>
    </source>
</evidence>
<name>PLSY_VIBC1</name>
<gene>
    <name evidence="1" type="primary">plsY</name>
    <name type="ordered locus">VIBHAR_00854</name>
</gene>
<feature type="chain" id="PRO_1000084403" description="Glycerol-3-phosphate acyltransferase">
    <location>
        <begin position="1"/>
        <end position="203"/>
    </location>
</feature>
<feature type="transmembrane region" description="Helical" evidence="1">
    <location>
        <begin position="4"/>
        <end position="24"/>
    </location>
</feature>
<feature type="transmembrane region" description="Helical" evidence="1">
    <location>
        <begin position="68"/>
        <end position="88"/>
    </location>
</feature>
<feature type="transmembrane region" description="Helical" evidence="1">
    <location>
        <begin position="117"/>
        <end position="137"/>
    </location>
</feature>
<feature type="transmembrane region" description="Helical" evidence="1">
    <location>
        <begin position="155"/>
        <end position="175"/>
    </location>
</feature>
<comment type="function">
    <text evidence="1">Catalyzes the transfer of an acyl group from acyl-phosphate (acyl-PO(4)) to glycerol-3-phosphate (G3P) to form lysophosphatidic acid (LPA). This enzyme utilizes acyl-phosphate as fatty acyl donor, but not acyl-CoA or acyl-ACP.</text>
</comment>
<comment type="catalytic activity">
    <reaction evidence="1">
        <text>an acyl phosphate + sn-glycerol 3-phosphate = a 1-acyl-sn-glycero-3-phosphate + phosphate</text>
        <dbReference type="Rhea" id="RHEA:34075"/>
        <dbReference type="ChEBI" id="CHEBI:43474"/>
        <dbReference type="ChEBI" id="CHEBI:57597"/>
        <dbReference type="ChEBI" id="CHEBI:57970"/>
        <dbReference type="ChEBI" id="CHEBI:59918"/>
        <dbReference type="EC" id="2.3.1.275"/>
    </reaction>
</comment>
<comment type="pathway">
    <text evidence="1">Lipid metabolism; phospholipid metabolism.</text>
</comment>
<comment type="subunit">
    <text evidence="1">Probably interacts with PlsX.</text>
</comment>
<comment type="subcellular location">
    <subcellularLocation>
        <location evidence="1">Cell inner membrane</location>
        <topology evidence="1">Multi-pass membrane protein</topology>
    </subcellularLocation>
</comment>
<comment type="similarity">
    <text evidence="1">Belongs to the PlsY family.</text>
</comment>
<reference key="1">
    <citation type="submission" date="2007-08" db="EMBL/GenBank/DDBJ databases">
        <authorList>
            <consortium name="The Vibrio harveyi Genome Sequencing Project"/>
            <person name="Bassler B."/>
            <person name="Clifton S.W."/>
            <person name="Fulton L."/>
            <person name="Delehaunty K."/>
            <person name="Fronick C."/>
            <person name="Harrison M."/>
            <person name="Markivic C."/>
            <person name="Fulton R."/>
            <person name="Tin-Wollam A.-M."/>
            <person name="Shah N."/>
            <person name="Pepin K."/>
            <person name="Nash W."/>
            <person name="Thiruvilangam P."/>
            <person name="Bhonagiri V."/>
            <person name="Waters C."/>
            <person name="Tu K.C."/>
            <person name="Irgon J."/>
            <person name="Wilson R.K."/>
        </authorList>
    </citation>
    <scope>NUCLEOTIDE SEQUENCE [LARGE SCALE GENOMIC DNA]</scope>
    <source>
        <strain>ATCC BAA-1116 / BB120</strain>
    </source>
</reference>
<accession>A7MWQ0</accession>